<keyword id="KW-1015">Disulfide bond</keyword>
<keyword id="KW-0325">Glycoprotein</keyword>
<keyword id="KW-0960">Knottin</keyword>
<keyword id="KW-1185">Reference proteome</keyword>
<keyword id="KW-0964">Secreted</keyword>
<keyword id="KW-0732">Signal</keyword>
<reference key="1">
    <citation type="journal article" date="2006" name="Genome Res.">
        <title>Alu-mediated 100-kb deletion in the primate genome: the loss of the agouti signaling protein gene in the lesser apes.</title>
        <authorList>
            <person name="Nakayama K."/>
            <person name="Ishida T."/>
        </authorList>
    </citation>
    <scope>NUCLEOTIDE SEQUENCE [GENOMIC DNA]</scope>
</reference>
<dbReference type="EMBL" id="AB236870">
    <property type="protein sequence ID" value="BAE93018.1"/>
    <property type="molecule type" value="Genomic_DNA"/>
</dbReference>
<dbReference type="RefSeq" id="XP_008955444.1">
    <property type="nucleotide sequence ID" value="XM_008957196.3"/>
</dbReference>
<dbReference type="STRING" id="9597.ENSPPAP00000015772"/>
<dbReference type="GlyCosmos" id="Q1XGV6">
    <property type="glycosylation" value="1 site, No reported glycans"/>
</dbReference>
<dbReference type="Ensembl" id="ENSPPAT00000038463.1">
    <property type="protein sequence ID" value="ENSPPAP00000015772.1"/>
    <property type="gene ID" value="ENSPPAG00000031015.1"/>
</dbReference>
<dbReference type="GeneID" id="100974762"/>
<dbReference type="KEGG" id="pps:100974762"/>
<dbReference type="CTD" id="434"/>
<dbReference type="eggNOG" id="ENOG502S5XF">
    <property type="taxonomic scope" value="Eukaryota"/>
</dbReference>
<dbReference type="GeneTree" id="ENSGT00940000154258"/>
<dbReference type="OMA" id="CHCRFFR"/>
<dbReference type="Proteomes" id="UP000240080">
    <property type="component" value="Chromosome 20"/>
</dbReference>
<dbReference type="Bgee" id="ENSPPAG00000031015">
    <property type="expression patterns" value="Expressed in heart and 5 other cell types or tissues"/>
</dbReference>
<dbReference type="GO" id="GO:0005615">
    <property type="term" value="C:extracellular space"/>
    <property type="evidence" value="ECO:0000250"/>
    <property type="project" value="UniProtKB"/>
</dbReference>
<dbReference type="GO" id="GO:0031779">
    <property type="term" value="F:melanocortin receptor binding"/>
    <property type="evidence" value="ECO:0007669"/>
    <property type="project" value="TreeGrafter"/>
</dbReference>
<dbReference type="GO" id="GO:0005184">
    <property type="term" value="F:neuropeptide hormone activity"/>
    <property type="evidence" value="ECO:0007669"/>
    <property type="project" value="TreeGrafter"/>
</dbReference>
<dbReference type="GO" id="GO:0009755">
    <property type="term" value="P:hormone-mediated signaling pathway"/>
    <property type="evidence" value="ECO:0007669"/>
    <property type="project" value="InterPro"/>
</dbReference>
<dbReference type="GO" id="GO:0042438">
    <property type="term" value="P:melanin biosynthetic process"/>
    <property type="evidence" value="ECO:0000250"/>
    <property type="project" value="UniProtKB"/>
</dbReference>
<dbReference type="GO" id="GO:0032438">
    <property type="term" value="P:melanosome organization"/>
    <property type="evidence" value="ECO:0007669"/>
    <property type="project" value="TreeGrafter"/>
</dbReference>
<dbReference type="FunFam" id="4.10.760.10:FF:000002">
    <property type="entry name" value="Agouti-signaling protein"/>
    <property type="match status" value="1"/>
</dbReference>
<dbReference type="Gene3D" id="4.10.760.10">
    <property type="entry name" value="Agouti domain"/>
    <property type="match status" value="1"/>
</dbReference>
<dbReference type="InterPro" id="IPR007733">
    <property type="entry name" value="Agouti"/>
</dbReference>
<dbReference type="InterPro" id="IPR027300">
    <property type="entry name" value="Agouti_dom"/>
</dbReference>
<dbReference type="InterPro" id="IPR036836">
    <property type="entry name" value="Agouti_dom_sf"/>
</dbReference>
<dbReference type="PANTHER" id="PTHR16551">
    <property type="entry name" value="AGOUTI RELATED"/>
    <property type="match status" value="1"/>
</dbReference>
<dbReference type="PANTHER" id="PTHR16551:SF1">
    <property type="entry name" value="AGOUTI-SIGNALING PROTEIN"/>
    <property type="match status" value="1"/>
</dbReference>
<dbReference type="Pfam" id="PF05039">
    <property type="entry name" value="Agouti"/>
    <property type="match status" value="1"/>
</dbReference>
<dbReference type="SMART" id="SM00792">
    <property type="entry name" value="Agouti"/>
    <property type="match status" value="1"/>
</dbReference>
<dbReference type="SUPFAM" id="SSF57055">
    <property type="entry name" value="Agouti-related protein"/>
    <property type="match status" value="1"/>
</dbReference>
<dbReference type="PROSITE" id="PS60024">
    <property type="entry name" value="AGOUTI_1"/>
    <property type="match status" value="1"/>
</dbReference>
<dbReference type="PROSITE" id="PS51150">
    <property type="entry name" value="AGOUTI_2"/>
    <property type="match status" value="1"/>
</dbReference>
<organism>
    <name type="scientific">Pan paniscus</name>
    <name type="common">Pygmy chimpanzee</name>
    <name type="synonym">Bonobo</name>
    <dbReference type="NCBI Taxonomy" id="9597"/>
    <lineage>
        <taxon>Eukaryota</taxon>
        <taxon>Metazoa</taxon>
        <taxon>Chordata</taxon>
        <taxon>Craniata</taxon>
        <taxon>Vertebrata</taxon>
        <taxon>Euteleostomi</taxon>
        <taxon>Mammalia</taxon>
        <taxon>Eutheria</taxon>
        <taxon>Euarchontoglires</taxon>
        <taxon>Primates</taxon>
        <taxon>Haplorrhini</taxon>
        <taxon>Catarrhini</taxon>
        <taxon>Hominidae</taxon>
        <taxon>Pan</taxon>
    </lineage>
</organism>
<feature type="signal peptide" evidence="4">
    <location>
        <begin position="1"/>
        <end position="22"/>
    </location>
</feature>
<feature type="chain" id="PRO_0000235200" description="Agouti-signaling protein">
    <location>
        <begin position="23"/>
        <end position="132"/>
    </location>
</feature>
<feature type="domain" description="Agouti" evidence="5">
    <location>
        <begin position="93"/>
        <end position="132"/>
    </location>
</feature>
<feature type="region of interest" description="Disordered" evidence="6">
    <location>
        <begin position="61"/>
        <end position="87"/>
    </location>
</feature>
<feature type="compositionally biased region" description="Basic and acidic residues" evidence="6">
    <location>
        <begin position="63"/>
        <end position="79"/>
    </location>
</feature>
<feature type="glycosylation site" description="N-linked (GlcNAc...) asparagine" evidence="4">
    <location>
        <position position="39"/>
    </location>
</feature>
<feature type="disulfide bond" evidence="5">
    <location>
        <begin position="93"/>
        <end position="108"/>
    </location>
</feature>
<feature type="disulfide bond" evidence="5">
    <location>
        <begin position="100"/>
        <end position="114"/>
    </location>
</feature>
<feature type="disulfide bond" evidence="5">
    <location>
        <begin position="107"/>
        <end position="125"/>
    </location>
</feature>
<feature type="disulfide bond" evidence="5">
    <location>
        <begin position="111"/>
        <end position="132"/>
    </location>
</feature>
<feature type="disulfide bond" evidence="5">
    <location>
        <begin position="116"/>
        <end position="123"/>
    </location>
</feature>
<comment type="function">
    <text evidence="3">Involved in the regulation of melanogenesis. The binding of ASP to MC1R precludes alpha-MSH initiated signaling and thus blocks production of cAMP, leading to a down-regulation of eumelanogenesis (brown/black pigment) and thus increasing synthesis of pheomelanin (yellow/red pigment) (By similarity).</text>
</comment>
<comment type="subcellular location">
    <subcellularLocation>
        <location evidence="2">Secreted</location>
    </subcellularLocation>
</comment>
<comment type="domain">
    <text evidence="1">The presence of a 'disulfide through disulfide knot' structurally defines this protein as a knottin.</text>
</comment>
<sequence length="132" mass="14593">MDVTRLLLATLLVFLCFFTANSHLPPEEKLRDDRSLRSNSSVNLLDFPSVSIVALNKKSKQIGRKEAEKKRSSKKEASMKKVARPRTPLSAPCVATRNSCKPPAPACCDPCASCQCRFFRSACSCRVLSLNC</sequence>
<protein>
    <recommendedName>
        <fullName>Agouti-signaling protein</fullName>
        <shortName>ASP</shortName>
    </recommendedName>
    <alternativeName>
        <fullName>Agouti switch protein</fullName>
    </alternativeName>
</protein>
<accession>Q1XGV6</accession>
<gene>
    <name type="primary">ASIP</name>
</gene>
<evidence type="ECO:0000250" key="1"/>
<evidence type="ECO:0000250" key="2">
    <source>
        <dbReference type="UniProtKB" id="P42127"/>
    </source>
</evidence>
<evidence type="ECO:0000250" key="3">
    <source>
        <dbReference type="UniProtKB" id="Q03288"/>
    </source>
</evidence>
<evidence type="ECO:0000255" key="4"/>
<evidence type="ECO:0000255" key="5">
    <source>
        <dbReference type="PROSITE-ProRule" id="PRU00494"/>
    </source>
</evidence>
<evidence type="ECO:0000256" key="6">
    <source>
        <dbReference type="SAM" id="MobiDB-lite"/>
    </source>
</evidence>
<name>ASIP_PANPA</name>
<proteinExistence type="inferred from homology"/>